<comment type="function">
    <text evidence="1">Catalyzes the attachment of proline to tRNA(Pro) in a two-step reaction: proline is first activated by ATP to form Pro-AMP and then transferred to the acceptor end of tRNA(Pro).</text>
</comment>
<comment type="catalytic activity">
    <reaction evidence="1">
        <text>tRNA(Pro) + L-proline + ATP = L-prolyl-tRNA(Pro) + AMP + diphosphate</text>
        <dbReference type="Rhea" id="RHEA:14305"/>
        <dbReference type="Rhea" id="RHEA-COMP:9700"/>
        <dbReference type="Rhea" id="RHEA-COMP:9702"/>
        <dbReference type="ChEBI" id="CHEBI:30616"/>
        <dbReference type="ChEBI" id="CHEBI:33019"/>
        <dbReference type="ChEBI" id="CHEBI:60039"/>
        <dbReference type="ChEBI" id="CHEBI:78442"/>
        <dbReference type="ChEBI" id="CHEBI:78532"/>
        <dbReference type="ChEBI" id="CHEBI:456215"/>
        <dbReference type="EC" id="6.1.1.15"/>
    </reaction>
</comment>
<comment type="subunit">
    <text evidence="1">Homodimer.</text>
</comment>
<comment type="subcellular location">
    <subcellularLocation>
        <location evidence="1">Cytoplasm</location>
    </subcellularLocation>
</comment>
<comment type="domain">
    <text evidence="1">Consists of three domains: the N-terminal catalytic domain, the anticodon-binding domain and the C-terminal extension.</text>
</comment>
<comment type="similarity">
    <text evidence="1">Belongs to the class-II aminoacyl-tRNA synthetase family. ProS type 3 subfamily.</text>
</comment>
<keyword id="KW-0030">Aminoacyl-tRNA synthetase</keyword>
<keyword id="KW-0067">ATP-binding</keyword>
<keyword id="KW-0963">Cytoplasm</keyword>
<keyword id="KW-0436">Ligase</keyword>
<keyword id="KW-0547">Nucleotide-binding</keyword>
<keyword id="KW-0648">Protein biosynthesis</keyword>
<keyword id="KW-1185">Reference proteome</keyword>
<gene>
    <name evidence="1" type="primary">proS</name>
    <name type="ordered locus">Saci_1553</name>
</gene>
<evidence type="ECO:0000255" key="1">
    <source>
        <dbReference type="HAMAP-Rule" id="MF_01571"/>
    </source>
</evidence>
<reference key="1">
    <citation type="journal article" date="2005" name="J. Bacteriol.">
        <title>The genome of Sulfolobus acidocaldarius, a model organism of the Crenarchaeota.</title>
        <authorList>
            <person name="Chen L."/>
            <person name="Bruegger K."/>
            <person name="Skovgaard M."/>
            <person name="Redder P."/>
            <person name="She Q."/>
            <person name="Torarinsson E."/>
            <person name="Greve B."/>
            <person name="Awayez M."/>
            <person name="Zibat A."/>
            <person name="Klenk H.-P."/>
            <person name="Garrett R.A."/>
        </authorList>
    </citation>
    <scope>NUCLEOTIDE SEQUENCE [LARGE SCALE GENOMIC DNA]</scope>
    <source>
        <strain>ATCC 33909 / DSM 639 / JCM 8929 / NBRC 15157 / NCIMB 11770</strain>
    </source>
</reference>
<sequence>MKLTREKWENNFSEWFDWVIREAEIYDYGRYPVKGMGVWLPYGFKIRQAAVDLIRKLLDAKGHEEVLFPLLVPEDLLRREGEHIKGFESEVFWVTKGGEENLDIRLALRPTSETAITYMETYWVQSYKQLPKKYYQIVSVFRYETKATRPMIRLREVSTFKEAHTLHETYEDAERQVKEAIEIYKNFFEELGIPYIMSQRPEWDKFAGAIYTIAFDTIMPDSRVLQIGTVHHLGQHFTKAFDLKVQRKDGTLDYPHQTSYGISDRVIAVAVSINGDDHGTILSPVLAPIKAVIIPIPAKDEKETEKIIEYSEDVAKILVSNGINTVIDKDTEKTPGEKYYIWEIKGVPLRIEIGPRELSSNSVFIKRRDTLQGISVKKENLVSEVVKLLETLRKDLKERAWNFLRSKIRYTDNLEEAKKMLDSKAGIVEVPWCESNECGLKIEETTGARVLGKPYDSPRDVSKSTCVVCKKPAKTTLRLAKTY</sequence>
<feature type="chain" id="PRO_0000249173" description="Proline--tRNA ligase">
    <location>
        <begin position="1"/>
        <end position="483"/>
    </location>
</feature>
<protein>
    <recommendedName>
        <fullName evidence="1">Proline--tRNA ligase</fullName>
        <ecNumber evidence="1">6.1.1.15</ecNumber>
    </recommendedName>
    <alternativeName>
        <fullName evidence="1">Prolyl-tRNA synthetase</fullName>
        <shortName evidence="1">ProRS</shortName>
    </alternativeName>
</protein>
<dbReference type="EC" id="6.1.1.15" evidence="1"/>
<dbReference type="EMBL" id="CP000077">
    <property type="protein sequence ID" value="AAY80866.1"/>
    <property type="molecule type" value="Genomic_DNA"/>
</dbReference>
<dbReference type="RefSeq" id="WP_011278368.1">
    <property type="nucleotide sequence ID" value="NC_007181.1"/>
</dbReference>
<dbReference type="SMR" id="Q4J8L4"/>
<dbReference type="STRING" id="330779.Saci_1553"/>
<dbReference type="GeneID" id="14552046"/>
<dbReference type="GeneID" id="78441896"/>
<dbReference type="KEGG" id="sai:Saci_1553"/>
<dbReference type="PATRIC" id="fig|330779.12.peg.1493"/>
<dbReference type="eggNOG" id="arCOG00402">
    <property type="taxonomic scope" value="Archaea"/>
</dbReference>
<dbReference type="HOGENOM" id="CLU_001882_4_2_2"/>
<dbReference type="Proteomes" id="UP000001018">
    <property type="component" value="Chromosome"/>
</dbReference>
<dbReference type="GO" id="GO:0017101">
    <property type="term" value="C:aminoacyl-tRNA synthetase multienzyme complex"/>
    <property type="evidence" value="ECO:0007669"/>
    <property type="project" value="TreeGrafter"/>
</dbReference>
<dbReference type="GO" id="GO:0005737">
    <property type="term" value="C:cytoplasm"/>
    <property type="evidence" value="ECO:0007669"/>
    <property type="project" value="UniProtKB-SubCell"/>
</dbReference>
<dbReference type="GO" id="GO:0005524">
    <property type="term" value="F:ATP binding"/>
    <property type="evidence" value="ECO:0007669"/>
    <property type="project" value="UniProtKB-UniRule"/>
</dbReference>
<dbReference type="GO" id="GO:0004827">
    <property type="term" value="F:proline-tRNA ligase activity"/>
    <property type="evidence" value="ECO:0007669"/>
    <property type="project" value="UniProtKB-UniRule"/>
</dbReference>
<dbReference type="GO" id="GO:0006433">
    <property type="term" value="P:prolyl-tRNA aminoacylation"/>
    <property type="evidence" value="ECO:0007669"/>
    <property type="project" value="UniProtKB-UniRule"/>
</dbReference>
<dbReference type="CDD" id="cd00862">
    <property type="entry name" value="ProRS_anticodon_zinc"/>
    <property type="match status" value="1"/>
</dbReference>
<dbReference type="CDD" id="cd00778">
    <property type="entry name" value="ProRS_core_arch_euk"/>
    <property type="match status" value="1"/>
</dbReference>
<dbReference type="FunFam" id="3.30.930.10:FF:000037">
    <property type="entry name" value="Proline--tRNA ligase"/>
    <property type="match status" value="1"/>
</dbReference>
<dbReference type="Gene3D" id="3.40.50.800">
    <property type="entry name" value="Anticodon-binding domain"/>
    <property type="match status" value="1"/>
</dbReference>
<dbReference type="Gene3D" id="3.30.930.10">
    <property type="entry name" value="Bira Bifunctional Protein, Domain 2"/>
    <property type="match status" value="1"/>
</dbReference>
<dbReference type="Gene3D" id="3.30.110.30">
    <property type="entry name" value="C-terminal domain of ProRS"/>
    <property type="match status" value="1"/>
</dbReference>
<dbReference type="HAMAP" id="MF_01571">
    <property type="entry name" value="Pro_tRNA_synth_type3"/>
    <property type="match status" value="1"/>
</dbReference>
<dbReference type="InterPro" id="IPR002314">
    <property type="entry name" value="aa-tRNA-synt_IIb"/>
</dbReference>
<dbReference type="InterPro" id="IPR006195">
    <property type="entry name" value="aa-tRNA-synth_II"/>
</dbReference>
<dbReference type="InterPro" id="IPR045864">
    <property type="entry name" value="aa-tRNA-synth_II/BPL/LPL"/>
</dbReference>
<dbReference type="InterPro" id="IPR004154">
    <property type="entry name" value="Anticodon-bd"/>
</dbReference>
<dbReference type="InterPro" id="IPR036621">
    <property type="entry name" value="Anticodon-bd_dom_sf"/>
</dbReference>
<dbReference type="InterPro" id="IPR002316">
    <property type="entry name" value="Pro-tRNA-ligase_IIa"/>
</dbReference>
<dbReference type="InterPro" id="IPR004499">
    <property type="entry name" value="Pro-tRNA-ligase_IIa_arc-type"/>
</dbReference>
<dbReference type="InterPro" id="IPR016061">
    <property type="entry name" value="Pro-tRNA_ligase_II_C"/>
</dbReference>
<dbReference type="InterPro" id="IPR017449">
    <property type="entry name" value="Pro-tRNA_synth_II"/>
</dbReference>
<dbReference type="InterPro" id="IPR033721">
    <property type="entry name" value="ProRS_core_arch_euk"/>
</dbReference>
<dbReference type="NCBIfam" id="TIGR00408">
    <property type="entry name" value="proS_fam_I"/>
    <property type="match status" value="1"/>
</dbReference>
<dbReference type="PANTHER" id="PTHR43382:SF2">
    <property type="entry name" value="BIFUNCTIONAL GLUTAMATE_PROLINE--TRNA LIGASE"/>
    <property type="match status" value="1"/>
</dbReference>
<dbReference type="PANTHER" id="PTHR43382">
    <property type="entry name" value="PROLYL-TRNA SYNTHETASE"/>
    <property type="match status" value="1"/>
</dbReference>
<dbReference type="Pfam" id="PF03129">
    <property type="entry name" value="HGTP_anticodon"/>
    <property type="match status" value="1"/>
</dbReference>
<dbReference type="Pfam" id="PF09180">
    <property type="entry name" value="ProRS-C_1"/>
    <property type="match status" value="1"/>
</dbReference>
<dbReference type="Pfam" id="PF00587">
    <property type="entry name" value="tRNA-synt_2b"/>
    <property type="match status" value="1"/>
</dbReference>
<dbReference type="PRINTS" id="PR01046">
    <property type="entry name" value="TRNASYNTHPRO"/>
</dbReference>
<dbReference type="SMART" id="SM00946">
    <property type="entry name" value="ProRS-C_1"/>
    <property type="match status" value="1"/>
</dbReference>
<dbReference type="SUPFAM" id="SSF64586">
    <property type="entry name" value="C-terminal domain of ProRS"/>
    <property type="match status" value="1"/>
</dbReference>
<dbReference type="SUPFAM" id="SSF52954">
    <property type="entry name" value="Class II aaRS ABD-related"/>
    <property type="match status" value="1"/>
</dbReference>
<dbReference type="SUPFAM" id="SSF55681">
    <property type="entry name" value="Class II aaRS and biotin synthetases"/>
    <property type="match status" value="1"/>
</dbReference>
<dbReference type="PROSITE" id="PS50862">
    <property type="entry name" value="AA_TRNA_LIGASE_II"/>
    <property type="match status" value="1"/>
</dbReference>
<name>SYP_SULAC</name>
<accession>Q4J8L4</accession>
<organism>
    <name type="scientific">Sulfolobus acidocaldarius (strain ATCC 33909 / DSM 639 / JCM 8929 / NBRC 15157 / NCIMB 11770)</name>
    <dbReference type="NCBI Taxonomy" id="330779"/>
    <lineage>
        <taxon>Archaea</taxon>
        <taxon>Thermoproteota</taxon>
        <taxon>Thermoprotei</taxon>
        <taxon>Sulfolobales</taxon>
        <taxon>Sulfolobaceae</taxon>
        <taxon>Sulfolobus</taxon>
    </lineage>
</organism>
<proteinExistence type="inferred from homology"/>